<feature type="chain" id="PRO_0000338652" description="3-demethoxyubiquinol 3-hydroxylase">
    <location>
        <begin position="1"/>
        <end position="211"/>
    </location>
</feature>
<feature type="binding site" evidence="1">
    <location>
        <position position="60"/>
    </location>
    <ligand>
        <name>Fe cation</name>
        <dbReference type="ChEBI" id="CHEBI:24875"/>
        <label>1</label>
    </ligand>
</feature>
<feature type="binding site" evidence="1">
    <location>
        <position position="90"/>
    </location>
    <ligand>
        <name>Fe cation</name>
        <dbReference type="ChEBI" id="CHEBI:24875"/>
        <label>1</label>
    </ligand>
</feature>
<feature type="binding site" evidence="1">
    <location>
        <position position="90"/>
    </location>
    <ligand>
        <name>Fe cation</name>
        <dbReference type="ChEBI" id="CHEBI:24875"/>
        <label>2</label>
    </ligand>
</feature>
<feature type="binding site" evidence="1">
    <location>
        <position position="93"/>
    </location>
    <ligand>
        <name>Fe cation</name>
        <dbReference type="ChEBI" id="CHEBI:24875"/>
        <label>1</label>
    </ligand>
</feature>
<feature type="binding site" evidence="1">
    <location>
        <position position="142"/>
    </location>
    <ligand>
        <name>Fe cation</name>
        <dbReference type="ChEBI" id="CHEBI:24875"/>
        <label>2</label>
    </ligand>
</feature>
<feature type="binding site" evidence="1">
    <location>
        <position position="174"/>
    </location>
    <ligand>
        <name>Fe cation</name>
        <dbReference type="ChEBI" id="CHEBI:24875"/>
        <label>1</label>
    </ligand>
</feature>
<feature type="binding site" evidence="1">
    <location>
        <position position="174"/>
    </location>
    <ligand>
        <name>Fe cation</name>
        <dbReference type="ChEBI" id="CHEBI:24875"/>
        <label>2</label>
    </ligand>
</feature>
<feature type="binding site" evidence="1">
    <location>
        <position position="177"/>
    </location>
    <ligand>
        <name>Fe cation</name>
        <dbReference type="ChEBI" id="CHEBI:24875"/>
        <label>2</label>
    </ligand>
</feature>
<gene>
    <name evidence="1" type="primary">coq7</name>
    <name type="ordered locus">A1S_2134</name>
</gene>
<sequence length="211" mass="23556">MRHYTGIDQLINSFDQALRSLVPGATAAQRQNPAETVEAKLGVEDARHVAGLMRVNHSGEVCAQALYHGQALTAKLPNVRREMQQAAIEEQDHLAWCEDRLKELNSHTSLLNPIWYGLSYGMGALAGIAGDKYSLGFVAETERQVSLHLQDHLNQLPAQDERSRKILEQMNEDELHHRHTALEAGGVELPYAVKITMTAISKLMTKTSYYL</sequence>
<organism>
    <name type="scientific">Acinetobacter baumannii (strain ATCC 17978 / DSM 105126 / CIP 53.77 / LMG 1025 / NCDC KC755 / 5377)</name>
    <dbReference type="NCBI Taxonomy" id="400667"/>
    <lineage>
        <taxon>Bacteria</taxon>
        <taxon>Pseudomonadati</taxon>
        <taxon>Pseudomonadota</taxon>
        <taxon>Gammaproteobacteria</taxon>
        <taxon>Moraxellales</taxon>
        <taxon>Moraxellaceae</taxon>
        <taxon>Acinetobacter</taxon>
        <taxon>Acinetobacter calcoaceticus/baumannii complex</taxon>
    </lineage>
</organism>
<proteinExistence type="inferred from homology"/>
<evidence type="ECO:0000255" key="1">
    <source>
        <dbReference type="HAMAP-Rule" id="MF_01658"/>
    </source>
</evidence>
<reference key="1">
    <citation type="journal article" date="2007" name="Genes Dev.">
        <title>New insights into Acinetobacter baumannii pathogenesis revealed by high-density pyrosequencing and transposon mutagenesis.</title>
        <authorList>
            <person name="Smith M.G."/>
            <person name="Gianoulis T.A."/>
            <person name="Pukatzki S."/>
            <person name="Mekalanos J.J."/>
            <person name="Ornston L.N."/>
            <person name="Gerstein M."/>
            <person name="Snyder M."/>
        </authorList>
    </citation>
    <scope>NUCLEOTIDE SEQUENCE [LARGE SCALE GENOMIC DNA]</scope>
    <source>
        <strain>ATCC 17978 / DSM 105126 / CIP 53.77 / LMG 1025 / NCDC KC755 / 5377</strain>
    </source>
</reference>
<dbReference type="EC" id="1.14.99.60" evidence="1"/>
<dbReference type="EMBL" id="CP000521">
    <property type="protein sequence ID" value="ABO12561.2"/>
    <property type="molecule type" value="Genomic_DNA"/>
</dbReference>
<dbReference type="RefSeq" id="WP_001216787.1">
    <property type="nucleotide sequence ID" value="NZ_CP053098.1"/>
</dbReference>
<dbReference type="SMR" id="A3M6L7"/>
<dbReference type="GeneID" id="92894376"/>
<dbReference type="KEGG" id="acb:A1S_2134"/>
<dbReference type="HOGENOM" id="CLU_088601_0_0_6"/>
<dbReference type="UniPathway" id="UPA00232"/>
<dbReference type="GO" id="GO:0005886">
    <property type="term" value="C:plasma membrane"/>
    <property type="evidence" value="ECO:0007669"/>
    <property type="project" value="UniProtKB-SubCell"/>
</dbReference>
<dbReference type="GO" id="GO:0008682">
    <property type="term" value="F:3-demethoxyubiquinol 3-hydroxylase activity"/>
    <property type="evidence" value="ECO:0007669"/>
    <property type="project" value="UniProtKB-EC"/>
</dbReference>
<dbReference type="GO" id="GO:0046872">
    <property type="term" value="F:metal ion binding"/>
    <property type="evidence" value="ECO:0007669"/>
    <property type="project" value="UniProtKB-KW"/>
</dbReference>
<dbReference type="GO" id="GO:0006744">
    <property type="term" value="P:ubiquinone biosynthetic process"/>
    <property type="evidence" value="ECO:0007669"/>
    <property type="project" value="UniProtKB-UniRule"/>
</dbReference>
<dbReference type="CDD" id="cd01042">
    <property type="entry name" value="DMQH"/>
    <property type="match status" value="1"/>
</dbReference>
<dbReference type="Gene3D" id="1.20.1260.10">
    <property type="match status" value="1"/>
</dbReference>
<dbReference type="HAMAP" id="MF_01658">
    <property type="entry name" value="COQ7"/>
    <property type="match status" value="1"/>
</dbReference>
<dbReference type="InterPro" id="IPR047809">
    <property type="entry name" value="COQ7_proteobact"/>
</dbReference>
<dbReference type="InterPro" id="IPR012347">
    <property type="entry name" value="Ferritin-like"/>
</dbReference>
<dbReference type="InterPro" id="IPR009078">
    <property type="entry name" value="Ferritin-like_SF"/>
</dbReference>
<dbReference type="InterPro" id="IPR011566">
    <property type="entry name" value="Ubq_synth_Coq7"/>
</dbReference>
<dbReference type="NCBIfam" id="NF033656">
    <property type="entry name" value="DMQ_monoox_COQ7"/>
    <property type="match status" value="1"/>
</dbReference>
<dbReference type="PANTHER" id="PTHR11237:SF4">
    <property type="entry name" value="5-DEMETHOXYUBIQUINONE HYDROXYLASE, MITOCHONDRIAL"/>
    <property type="match status" value="1"/>
</dbReference>
<dbReference type="PANTHER" id="PTHR11237">
    <property type="entry name" value="COENZYME Q10 BIOSYNTHESIS PROTEIN 7"/>
    <property type="match status" value="1"/>
</dbReference>
<dbReference type="Pfam" id="PF03232">
    <property type="entry name" value="COQ7"/>
    <property type="match status" value="1"/>
</dbReference>
<dbReference type="SUPFAM" id="SSF47240">
    <property type="entry name" value="Ferritin-like"/>
    <property type="match status" value="1"/>
</dbReference>
<keyword id="KW-1003">Cell membrane</keyword>
<keyword id="KW-0408">Iron</keyword>
<keyword id="KW-0472">Membrane</keyword>
<keyword id="KW-0479">Metal-binding</keyword>
<keyword id="KW-0503">Monooxygenase</keyword>
<keyword id="KW-0560">Oxidoreductase</keyword>
<keyword id="KW-0831">Ubiquinone biosynthesis</keyword>
<comment type="function">
    <text evidence="1">Catalyzes the hydroxylation of 2-nonaprenyl-3-methyl-6-methoxy-1,4-benzoquinol during ubiquinone biosynthesis.</text>
</comment>
<comment type="catalytic activity">
    <reaction evidence="1">
        <text>a 5-methoxy-2-methyl-3-(all-trans-polyprenyl)benzene-1,4-diol + AH2 + O2 = a 3-demethylubiquinol + A + H2O</text>
        <dbReference type="Rhea" id="RHEA:50908"/>
        <dbReference type="Rhea" id="RHEA-COMP:10859"/>
        <dbReference type="Rhea" id="RHEA-COMP:10914"/>
        <dbReference type="ChEBI" id="CHEBI:13193"/>
        <dbReference type="ChEBI" id="CHEBI:15377"/>
        <dbReference type="ChEBI" id="CHEBI:15379"/>
        <dbReference type="ChEBI" id="CHEBI:17499"/>
        <dbReference type="ChEBI" id="CHEBI:84167"/>
        <dbReference type="ChEBI" id="CHEBI:84422"/>
        <dbReference type="EC" id="1.14.99.60"/>
    </reaction>
</comment>
<comment type="cofactor">
    <cofactor evidence="1">
        <name>Fe cation</name>
        <dbReference type="ChEBI" id="CHEBI:24875"/>
    </cofactor>
    <text evidence="1">Binds 2 iron ions per subunit.</text>
</comment>
<comment type="pathway">
    <text evidence="1">Cofactor biosynthesis; ubiquinone biosynthesis.</text>
</comment>
<comment type="subcellular location">
    <subcellularLocation>
        <location evidence="1">Cell membrane</location>
        <topology evidence="1">Peripheral membrane protein</topology>
    </subcellularLocation>
</comment>
<comment type="similarity">
    <text evidence="1">Belongs to the COQ7 family.</text>
</comment>
<protein>
    <recommendedName>
        <fullName evidence="1">3-demethoxyubiquinol 3-hydroxylase</fullName>
        <shortName evidence="1">DMQ hydroxylase</shortName>
        <ecNumber evidence="1">1.14.99.60</ecNumber>
    </recommendedName>
    <alternativeName>
        <fullName evidence="1">2-nonaprenyl-3-methyl-6-methoxy-1,4-benzoquinol hydroxylase</fullName>
    </alternativeName>
</protein>
<accession>A3M6L7</accession>
<name>COQ7_ACIBT</name>